<evidence type="ECO:0000255" key="1">
    <source>
        <dbReference type="HAMAP-Rule" id="MF_00252"/>
    </source>
</evidence>
<name>SYK_LISIN</name>
<feature type="chain" id="PRO_0000152642" description="Lysine--tRNA ligase">
    <location>
        <begin position="1"/>
        <end position="498"/>
    </location>
</feature>
<feature type="binding site" evidence="1">
    <location>
        <position position="408"/>
    </location>
    <ligand>
        <name>Mg(2+)</name>
        <dbReference type="ChEBI" id="CHEBI:18420"/>
        <label>1</label>
    </ligand>
</feature>
<feature type="binding site" evidence="1">
    <location>
        <position position="415"/>
    </location>
    <ligand>
        <name>Mg(2+)</name>
        <dbReference type="ChEBI" id="CHEBI:18420"/>
        <label>1</label>
    </ligand>
</feature>
<feature type="binding site" evidence="1">
    <location>
        <position position="415"/>
    </location>
    <ligand>
        <name>Mg(2+)</name>
        <dbReference type="ChEBI" id="CHEBI:18420"/>
        <label>2</label>
    </ligand>
</feature>
<proteinExistence type="inferred from homology"/>
<comment type="catalytic activity">
    <reaction evidence="1">
        <text>tRNA(Lys) + L-lysine + ATP = L-lysyl-tRNA(Lys) + AMP + diphosphate</text>
        <dbReference type="Rhea" id="RHEA:20792"/>
        <dbReference type="Rhea" id="RHEA-COMP:9696"/>
        <dbReference type="Rhea" id="RHEA-COMP:9697"/>
        <dbReference type="ChEBI" id="CHEBI:30616"/>
        <dbReference type="ChEBI" id="CHEBI:32551"/>
        <dbReference type="ChEBI" id="CHEBI:33019"/>
        <dbReference type="ChEBI" id="CHEBI:78442"/>
        <dbReference type="ChEBI" id="CHEBI:78529"/>
        <dbReference type="ChEBI" id="CHEBI:456215"/>
        <dbReference type="EC" id="6.1.1.6"/>
    </reaction>
</comment>
<comment type="cofactor">
    <cofactor evidence="1">
        <name>Mg(2+)</name>
        <dbReference type="ChEBI" id="CHEBI:18420"/>
    </cofactor>
    <text evidence="1">Binds 3 Mg(2+) ions per subunit.</text>
</comment>
<comment type="subunit">
    <text evidence="1">Homodimer.</text>
</comment>
<comment type="subcellular location">
    <subcellularLocation>
        <location evidence="1">Cytoplasm</location>
    </subcellularLocation>
</comment>
<comment type="similarity">
    <text evidence="1">Belongs to the class-II aminoacyl-tRNA synthetase family.</text>
</comment>
<gene>
    <name evidence="1" type="primary">lysS</name>
    <name type="ordered locus">lin0260</name>
</gene>
<organism>
    <name type="scientific">Listeria innocua serovar 6a (strain ATCC BAA-680 / CLIP 11262)</name>
    <dbReference type="NCBI Taxonomy" id="272626"/>
    <lineage>
        <taxon>Bacteria</taxon>
        <taxon>Bacillati</taxon>
        <taxon>Bacillota</taxon>
        <taxon>Bacilli</taxon>
        <taxon>Bacillales</taxon>
        <taxon>Listeriaceae</taxon>
        <taxon>Listeria</taxon>
    </lineage>
</organism>
<sequence length="498" mass="57379">MSNENHEELNDQLIVRREKVDTLREEGIDPFGEKFIRSISPEEIETKFADKSKEDLEEAAIEVSVAGRIMTKRVKGKVGFTHIQDRFHQLQIYIRKDAIGEDAYAIFKLADLGDIIGIKGTIFRTNTGELSVKATEFTLLSKSLRPLPDKYHGLKDVEQRYRQRYLDLITNEESQNRFVMRSKILKYTRDYMDNQGFLEVETPVLHTIAGGAAAKPFITHHNALDMELYLRIALELHLKRLIVGGMDKVYEIGRVFRNEGTSTRHNPEFTMLESYAAYEDYEDVMDLVEGLVSTVCKQVNGTTKITYGEYDVDLTPNWRRIHMADAVKEYVGVDFWNVTSDEEAHELAKKHDVAVTEHMTYGHILNEFFETYVEEKLIQPTFVYGHPVEISPLAKKNKEDERFTDRFELFIVGREHANAFSELNDPIDQRERFEAQMKEREQGNDEAHGMDADFLEALEYGLPPTGGLGIGIDRLVMLLTDAPSIRDILLFPTMKHRD</sequence>
<keyword id="KW-0030">Aminoacyl-tRNA synthetase</keyword>
<keyword id="KW-0067">ATP-binding</keyword>
<keyword id="KW-0963">Cytoplasm</keyword>
<keyword id="KW-0436">Ligase</keyword>
<keyword id="KW-0460">Magnesium</keyword>
<keyword id="KW-0479">Metal-binding</keyword>
<keyword id="KW-0547">Nucleotide-binding</keyword>
<keyword id="KW-0648">Protein biosynthesis</keyword>
<dbReference type="EC" id="6.1.1.6" evidence="1"/>
<dbReference type="EMBL" id="AL596164">
    <property type="protein sequence ID" value="CAC95493.1"/>
    <property type="molecule type" value="Genomic_DNA"/>
</dbReference>
<dbReference type="PIR" id="AE1465">
    <property type="entry name" value="AE1465"/>
</dbReference>
<dbReference type="RefSeq" id="WP_003772459.1">
    <property type="nucleotide sequence ID" value="NC_003212.1"/>
</dbReference>
<dbReference type="SMR" id="Q92F47"/>
<dbReference type="STRING" id="272626.gene:17564572"/>
<dbReference type="GeneID" id="93233695"/>
<dbReference type="KEGG" id="lin:lysS"/>
<dbReference type="eggNOG" id="COG1190">
    <property type="taxonomic scope" value="Bacteria"/>
</dbReference>
<dbReference type="HOGENOM" id="CLU_008255_6_0_9"/>
<dbReference type="OrthoDB" id="9801152at2"/>
<dbReference type="Proteomes" id="UP000002513">
    <property type="component" value="Chromosome"/>
</dbReference>
<dbReference type="GO" id="GO:0005829">
    <property type="term" value="C:cytosol"/>
    <property type="evidence" value="ECO:0007669"/>
    <property type="project" value="TreeGrafter"/>
</dbReference>
<dbReference type="GO" id="GO:0005524">
    <property type="term" value="F:ATP binding"/>
    <property type="evidence" value="ECO:0007669"/>
    <property type="project" value="UniProtKB-UniRule"/>
</dbReference>
<dbReference type="GO" id="GO:0140096">
    <property type="term" value="F:catalytic activity, acting on a protein"/>
    <property type="evidence" value="ECO:0007669"/>
    <property type="project" value="UniProtKB-ARBA"/>
</dbReference>
<dbReference type="GO" id="GO:0004824">
    <property type="term" value="F:lysine-tRNA ligase activity"/>
    <property type="evidence" value="ECO:0007669"/>
    <property type="project" value="UniProtKB-UniRule"/>
</dbReference>
<dbReference type="GO" id="GO:0000287">
    <property type="term" value="F:magnesium ion binding"/>
    <property type="evidence" value="ECO:0007669"/>
    <property type="project" value="UniProtKB-UniRule"/>
</dbReference>
<dbReference type="GO" id="GO:0016740">
    <property type="term" value="F:transferase activity"/>
    <property type="evidence" value="ECO:0007669"/>
    <property type="project" value="UniProtKB-ARBA"/>
</dbReference>
<dbReference type="GO" id="GO:0000049">
    <property type="term" value="F:tRNA binding"/>
    <property type="evidence" value="ECO:0007669"/>
    <property type="project" value="TreeGrafter"/>
</dbReference>
<dbReference type="GO" id="GO:0006430">
    <property type="term" value="P:lysyl-tRNA aminoacylation"/>
    <property type="evidence" value="ECO:0007669"/>
    <property type="project" value="UniProtKB-UniRule"/>
</dbReference>
<dbReference type="CDD" id="cd00775">
    <property type="entry name" value="LysRS_core"/>
    <property type="match status" value="1"/>
</dbReference>
<dbReference type="CDD" id="cd04322">
    <property type="entry name" value="LysRS_N"/>
    <property type="match status" value="1"/>
</dbReference>
<dbReference type="FunFam" id="2.40.50.140:FF:000024">
    <property type="entry name" value="Lysine--tRNA ligase"/>
    <property type="match status" value="1"/>
</dbReference>
<dbReference type="FunFam" id="3.30.930.10:FF:000001">
    <property type="entry name" value="Lysine--tRNA ligase"/>
    <property type="match status" value="1"/>
</dbReference>
<dbReference type="Gene3D" id="3.30.930.10">
    <property type="entry name" value="Bira Bifunctional Protein, Domain 2"/>
    <property type="match status" value="1"/>
</dbReference>
<dbReference type="Gene3D" id="2.40.50.140">
    <property type="entry name" value="Nucleic acid-binding proteins"/>
    <property type="match status" value="1"/>
</dbReference>
<dbReference type="HAMAP" id="MF_00252">
    <property type="entry name" value="Lys_tRNA_synth_class2"/>
    <property type="match status" value="1"/>
</dbReference>
<dbReference type="InterPro" id="IPR004364">
    <property type="entry name" value="Aa-tRNA-synt_II"/>
</dbReference>
<dbReference type="InterPro" id="IPR006195">
    <property type="entry name" value="aa-tRNA-synth_II"/>
</dbReference>
<dbReference type="InterPro" id="IPR045864">
    <property type="entry name" value="aa-tRNA-synth_II/BPL/LPL"/>
</dbReference>
<dbReference type="InterPro" id="IPR002313">
    <property type="entry name" value="Lys-tRNA-ligase_II"/>
</dbReference>
<dbReference type="InterPro" id="IPR034762">
    <property type="entry name" value="Lys-tRNA-ligase_II_bac/euk"/>
</dbReference>
<dbReference type="InterPro" id="IPR044136">
    <property type="entry name" value="Lys-tRNA-ligase_II_N"/>
</dbReference>
<dbReference type="InterPro" id="IPR018149">
    <property type="entry name" value="Lys-tRNA-synth_II_C"/>
</dbReference>
<dbReference type="InterPro" id="IPR012340">
    <property type="entry name" value="NA-bd_OB-fold"/>
</dbReference>
<dbReference type="InterPro" id="IPR004365">
    <property type="entry name" value="NA-bd_OB_tRNA"/>
</dbReference>
<dbReference type="NCBIfam" id="TIGR00499">
    <property type="entry name" value="lysS_bact"/>
    <property type="match status" value="1"/>
</dbReference>
<dbReference type="NCBIfam" id="NF001756">
    <property type="entry name" value="PRK00484.1"/>
    <property type="match status" value="1"/>
</dbReference>
<dbReference type="PANTHER" id="PTHR42918:SF15">
    <property type="entry name" value="LYSINE--TRNA LIGASE, CHLOROPLASTIC_MITOCHONDRIAL"/>
    <property type="match status" value="1"/>
</dbReference>
<dbReference type="PANTHER" id="PTHR42918">
    <property type="entry name" value="LYSYL-TRNA SYNTHETASE"/>
    <property type="match status" value="1"/>
</dbReference>
<dbReference type="Pfam" id="PF00152">
    <property type="entry name" value="tRNA-synt_2"/>
    <property type="match status" value="1"/>
</dbReference>
<dbReference type="Pfam" id="PF01336">
    <property type="entry name" value="tRNA_anti-codon"/>
    <property type="match status" value="1"/>
</dbReference>
<dbReference type="PIRSF" id="PIRSF039101">
    <property type="entry name" value="LysRS2"/>
    <property type="match status" value="1"/>
</dbReference>
<dbReference type="PRINTS" id="PR00982">
    <property type="entry name" value="TRNASYNTHLYS"/>
</dbReference>
<dbReference type="SUPFAM" id="SSF55681">
    <property type="entry name" value="Class II aaRS and biotin synthetases"/>
    <property type="match status" value="1"/>
</dbReference>
<dbReference type="SUPFAM" id="SSF50249">
    <property type="entry name" value="Nucleic acid-binding proteins"/>
    <property type="match status" value="1"/>
</dbReference>
<dbReference type="PROSITE" id="PS50862">
    <property type="entry name" value="AA_TRNA_LIGASE_II"/>
    <property type="match status" value="1"/>
</dbReference>
<protein>
    <recommendedName>
        <fullName evidence="1">Lysine--tRNA ligase</fullName>
        <ecNumber evidence="1">6.1.1.6</ecNumber>
    </recommendedName>
    <alternativeName>
        <fullName evidence="1">Lysyl-tRNA synthetase</fullName>
        <shortName evidence="1">LysRS</shortName>
    </alternativeName>
</protein>
<accession>Q92F47</accession>
<reference key="1">
    <citation type="journal article" date="2001" name="Science">
        <title>Comparative genomics of Listeria species.</title>
        <authorList>
            <person name="Glaser P."/>
            <person name="Frangeul L."/>
            <person name="Buchrieser C."/>
            <person name="Rusniok C."/>
            <person name="Amend A."/>
            <person name="Baquero F."/>
            <person name="Berche P."/>
            <person name="Bloecker H."/>
            <person name="Brandt P."/>
            <person name="Chakraborty T."/>
            <person name="Charbit A."/>
            <person name="Chetouani F."/>
            <person name="Couve E."/>
            <person name="de Daruvar A."/>
            <person name="Dehoux P."/>
            <person name="Domann E."/>
            <person name="Dominguez-Bernal G."/>
            <person name="Duchaud E."/>
            <person name="Durant L."/>
            <person name="Dussurget O."/>
            <person name="Entian K.-D."/>
            <person name="Fsihi H."/>
            <person name="Garcia-del Portillo F."/>
            <person name="Garrido P."/>
            <person name="Gautier L."/>
            <person name="Goebel W."/>
            <person name="Gomez-Lopez N."/>
            <person name="Hain T."/>
            <person name="Hauf J."/>
            <person name="Jackson D."/>
            <person name="Jones L.-M."/>
            <person name="Kaerst U."/>
            <person name="Kreft J."/>
            <person name="Kuhn M."/>
            <person name="Kunst F."/>
            <person name="Kurapkat G."/>
            <person name="Madueno E."/>
            <person name="Maitournam A."/>
            <person name="Mata Vicente J."/>
            <person name="Ng E."/>
            <person name="Nedjari H."/>
            <person name="Nordsiek G."/>
            <person name="Novella S."/>
            <person name="de Pablos B."/>
            <person name="Perez-Diaz J.-C."/>
            <person name="Purcell R."/>
            <person name="Remmel B."/>
            <person name="Rose M."/>
            <person name="Schlueter T."/>
            <person name="Simoes N."/>
            <person name="Tierrez A."/>
            <person name="Vazquez-Boland J.-A."/>
            <person name="Voss H."/>
            <person name="Wehland J."/>
            <person name="Cossart P."/>
        </authorList>
    </citation>
    <scope>NUCLEOTIDE SEQUENCE [LARGE SCALE GENOMIC DNA]</scope>
    <source>
        <strain>ATCC BAA-680 / CLIP 11262</strain>
    </source>
</reference>